<dbReference type="EMBL" id="CP000570">
    <property type="protein sequence ID" value="ABN81821.1"/>
    <property type="molecule type" value="Genomic_DNA"/>
</dbReference>
<dbReference type="RefSeq" id="WP_004185395.1">
    <property type="nucleotide sequence ID" value="NC_009074.1"/>
</dbReference>
<dbReference type="SMR" id="A3N6Q7"/>
<dbReference type="GeneID" id="95550920"/>
<dbReference type="KEGG" id="bpd:BURPS668_0977"/>
<dbReference type="HOGENOM" id="CLU_190949_1_1_4"/>
<dbReference type="GO" id="GO:0022625">
    <property type="term" value="C:cytosolic large ribosomal subunit"/>
    <property type="evidence" value="ECO:0007669"/>
    <property type="project" value="TreeGrafter"/>
</dbReference>
<dbReference type="GO" id="GO:0003735">
    <property type="term" value="F:structural constituent of ribosome"/>
    <property type="evidence" value="ECO:0007669"/>
    <property type="project" value="InterPro"/>
</dbReference>
<dbReference type="GO" id="GO:0006412">
    <property type="term" value="P:translation"/>
    <property type="evidence" value="ECO:0007669"/>
    <property type="project" value="UniProtKB-UniRule"/>
</dbReference>
<dbReference type="FunFam" id="2.20.28.120:FF:000001">
    <property type="entry name" value="50S ribosomal protein L33"/>
    <property type="match status" value="1"/>
</dbReference>
<dbReference type="Gene3D" id="2.20.28.120">
    <property type="entry name" value="Ribosomal protein L33"/>
    <property type="match status" value="1"/>
</dbReference>
<dbReference type="HAMAP" id="MF_00294">
    <property type="entry name" value="Ribosomal_bL33"/>
    <property type="match status" value="1"/>
</dbReference>
<dbReference type="InterPro" id="IPR001705">
    <property type="entry name" value="Ribosomal_bL33"/>
</dbReference>
<dbReference type="InterPro" id="IPR018264">
    <property type="entry name" value="Ribosomal_bL33_CS"/>
</dbReference>
<dbReference type="InterPro" id="IPR038584">
    <property type="entry name" value="Ribosomal_bL33_sf"/>
</dbReference>
<dbReference type="InterPro" id="IPR011332">
    <property type="entry name" value="Ribosomal_zn-bd"/>
</dbReference>
<dbReference type="NCBIfam" id="NF001860">
    <property type="entry name" value="PRK00595.1"/>
    <property type="match status" value="1"/>
</dbReference>
<dbReference type="NCBIfam" id="TIGR01023">
    <property type="entry name" value="rpmG_bact"/>
    <property type="match status" value="1"/>
</dbReference>
<dbReference type="PANTHER" id="PTHR15238">
    <property type="entry name" value="54S RIBOSOMAL PROTEIN L39, MITOCHONDRIAL"/>
    <property type="match status" value="1"/>
</dbReference>
<dbReference type="PANTHER" id="PTHR15238:SF1">
    <property type="entry name" value="LARGE RIBOSOMAL SUBUNIT PROTEIN BL33M"/>
    <property type="match status" value="1"/>
</dbReference>
<dbReference type="Pfam" id="PF00471">
    <property type="entry name" value="Ribosomal_L33"/>
    <property type="match status" value="1"/>
</dbReference>
<dbReference type="SUPFAM" id="SSF57829">
    <property type="entry name" value="Zn-binding ribosomal proteins"/>
    <property type="match status" value="1"/>
</dbReference>
<dbReference type="PROSITE" id="PS00582">
    <property type="entry name" value="RIBOSOMAL_L33"/>
    <property type="match status" value="1"/>
</dbReference>
<keyword id="KW-0687">Ribonucleoprotein</keyword>
<keyword id="KW-0689">Ribosomal protein</keyword>
<organism>
    <name type="scientific">Burkholderia pseudomallei (strain 668)</name>
    <dbReference type="NCBI Taxonomy" id="320373"/>
    <lineage>
        <taxon>Bacteria</taxon>
        <taxon>Pseudomonadati</taxon>
        <taxon>Pseudomonadota</taxon>
        <taxon>Betaproteobacteria</taxon>
        <taxon>Burkholderiales</taxon>
        <taxon>Burkholderiaceae</taxon>
        <taxon>Burkholderia</taxon>
        <taxon>pseudomallei group</taxon>
    </lineage>
</organism>
<accession>A3N6Q7</accession>
<name>RL33_BURP6</name>
<sequence length="55" mass="6356">MAKGARDKIKLESTAGTGHFYTTTKNKRNMPEKMEIMKFDPVARKHVAYKETKIK</sequence>
<evidence type="ECO:0000255" key="1">
    <source>
        <dbReference type="HAMAP-Rule" id="MF_00294"/>
    </source>
</evidence>
<evidence type="ECO:0000256" key="2">
    <source>
        <dbReference type="SAM" id="MobiDB-lite"/>
    </source>
</evidence>
<evidence type="ECO:0000305" key="3"/>
<feature type="chain" id="PRO_1000115114" description="Large ribosomal subunit protein bL33">
    <location>
        <begin position="1"/>
        <end position="55"/>
    </location>
</feature>
<feature type="region of interest" description="Disordered" evidence="2">
    <location>
        <begin position="1"/>
        <end position="24"/>
    </location>
</feature>
<feature type="compositionally biased region" description="Basic and acidic residues" evidence="2">
    <location>
        <begin position="1"/>
        <end position="11"/>
    </location>
</feature>
<feature type="compositionally biased region" description="Polar residues" evidence="2">
    <location>
        <begin position="14"/>
        <end position="24"/>
    </location>
</feature>
<reference key="1">
    <citation type="journal article" date="2010" name="Genome Biol. Evol.">
        <title>Continuing evolution of Burkholderia mallei through genome reduction and large-scale rearrangements.</title>
        <authorList>
            <person name="Losada L."/>
            <person name="Ronning C.M."/>
            <person name="DeShazer D."/>
            <person name="Woods D."/>
            <person name="Fedorova N."/>
            <person name="Kim H.S."/>
            <person name="Shabalina S.A."/>
            <person name="Pearson T.R."/>
            <person name="Brinkac L."/>
            <person name="Tan P."/>
            <person name="Nandi T."/>
            <person name="Crabtree J."/>
            <person name="Badger J."/>
            <person name="Beckstrom-Sternberg S."/>
            <person name="Saqib M."/>
            <person name="Schutzer S.E."/>
            <person name="Keim P."/>
            <person name="Nierman W.C."/>
        </authorList>
    </citation>
    <scope>NUCLEOTIDE SEQUENCE [LARGE SCALE GENOMIC DNA]</scope>
    <source>
        <strain>668</strain>
    </source>
</reference>
<comment type="similarity">
    <text evidence="1">Belongs to the bacterial ribosomal protein bL33 family.</text>
</comment>
<gene>
    <name evidence="1" type="primary">rpmG</name>
    <name type="ordered locus">BURPS668_0977</name>
</gene>
<protein>
    <recommendedName>
        <fullName evidence="1">Large ribosomal subunit protein bL33</fullName>
    </recommendedName>
    <alternativeName>
        <fullName evidence="3">50S ribosomal protein L33</fullName>
    </alternativeName>
</protein>
<proteinExistence type="inferred from homology"/>